<accession>Q0ID25</accession>
<name>RL36_SYNS3</name>
<gene>
    <name evidence="1" type="primary">rpmJ</name>
    <name type="ordered locus">sync_0417</name>
</gene>
<comment type="similarity">
    <text evidence="1">Belongs to the bacterial ribosomal protein bL36 family.</text>
</comment>
<evidence type="ECO:0000255" key="1">
    <source>
        <dbReference type="HAMAP-Rule" id="MF_00251"/>
    </source>
</evidence>
<evidence type="ECO:0000305" key="2"/>
<keyword id="KW-1185">Reference proteome</keyword>
<keyword id="KW-0687">Ribonucleoprotein</keyword>
<keyword id="KW-0689">Ribosomal protein</keyword>
<sequence length="37" mass="4389">MKVRASVKKMCEKCRVIRRHGRVMVICPNPKHKQRQG</sequence>
<protein>
    <recommendedName>
        <fullName evidence="1">Large ribosomal subunit protein bL36</fullName>
    </recommendedName>
    <alternativeName>
        <fullName evidence="2">50S ribosomal protein L36</fullName>
    </alternativeName>
</protein>
<proteinExistence type="inferred from homology"/>
<dbReference type="EMBL" id="CP000435">
    <property type="protein sequence ID" value="ABI45472.1"/>
    <property type="molecule type" value="Genomic_DNA"/>
</dbReference>
<dbReference type="RefSeq" id="WP_011618382.1">
    <property type="nucleotide sequence ID" value="NC_008319.1"/>
</dbReference>
<dbReference type="SMR" id="Q0ID25"/>
<dbReference type="STRING" id="64471.sync_0417"/>
<dbReference type="KEGG" id="syg:sync_0417"/>
<dbReference type="eggNOG" id="COG0257">
    <property type="taxonomic scope" value="Bacteria"/>
</dbReference>
<dbReference type="HOGENOM" id="CLU_135723_6_2_3"/>
<dbReference type="OrthoDB" id="9802520at2"/>
<dbReference type="Proteomes" id="UP000001961">
    <property type="component" value="Chromosome"/>
</dbReference>
<dbReference type="GO" id="GO:0005737">
    <property type="term" value="C:cytoplasm"/>
    <property type="evidence" value="ECO:0007669"/>
    <property type="project" value="UniProtKB-ARBA"/>
</dbReference>
<dbReference type="GO" id="GO:1990904">
    <property type="term" value="C:ribonucleoprotein complex"/>
    <property type="evidence" value="ECO:0007669"/>
    <property type="project" value="UniProtKB-KW"/>
</dbReference>
<dbReference type="GO" id="GO:0005840">
    <property type="term" value="C:ribosome"/>
    <property type="evidence" value="ECO:0007669"/>
    <property type="project" value="UniProtKB-KW"/>
</dbReference>
<dbReference type="GO" id="GO:0003735">
    <property type="term" value="F:structural constituent of ribosome"/>
    <property type="evidence" value="ECO:0007669"/>
    <property type="project" value="InterPro"/>
</dbReference>
<dbReference type="GO" id="GO:0006412">
    <property type="term" value="P:translation"/>
    <property type="evidence" value="ECO:0007669"/>
    <property type="project" value="UniProtKB-UniRule"/>
</dbReference>
<dbReference type="HAMAP" id="MF_00251">
    <property type="entry name" value="Ribosomal_bL36"/>
    <property type="match status" value="1"/>
</dbReference>
<dbReference type="InterPro" id="IPR000473">
    <property type="entry name" value="Ribosomal_bL36"/>
</dbReference>
<dbReference type="InterPro" id="IPR035977">
    <property type="entry name" value="Ribosomal_bL36_sp"/>
</dbReference>
<dbReference type="NCBIfam" id="TIGR01022">
    <property type="entry name" value="rpmJ_bact"/>
    <property type="match status" value="1"/>
</dbReference>
<dbReference type="PANTHER" id="PTHR42888">
    <property type="entry name" value="50S RIBOSOMAL PROTEIN L36, CHLOROPLASTIC"/>
    <property type="match status" value="1"/>
</dbReference>
<dbReference type="PANTHER" id="PTHR42888:SF1">
    <property type="entry name" value="LARGE RIBOSOMAL SUBUNIT PROTEIN BL36C"/>
    <property type="match status" value="1"/>
</dbReference>
<dbReference type="Pfam" id="PF00444">
    <property type="entry name" value="Ribosomal_L36"/>
    <property type="match status" value="1"/>
</dbReference>
<dbReference type="SUPFAM" id="SSF57840">
    <property type="entry name" value="Ribosomal protein L36"/>
    <property type="match status" value="1"/>
</dbReference>
<dbReference type="PROSITE" id="PS00828">
    <property type="entry name" value="RIBOSOMAL_L36"/>
    <property type="match status" value="1"/>
</dbReference>
<reference key="1">
    <citation type="journal article" date="2006" name="Proc. Natl. Acad. Sci. U.S.A.">
        <title>Genome sequence of Synechococcus CC9311: insights into adaptation to a coastal environment.</title>
        <authorList>
            <person name="Palenik B."/>
            <person name="Ren Q."/>
            <person name="Dupont C.L."/>
            <person name="Myers G.S."/>
            <person name="Heidelberg J.F."/>
            <person name="Badger J.H."/>
            <person name="Madupu R."/>
            <person name="Nelson W.C."/>
            <person name="Brinkac L.M."/>
            <person name="Dodson R.J."/>
            <person name="Durkin A.S."/>
            <person name="Daugherty S.C."/>
            <person name="Sullivan S.A."/>
            <person name="Khouri H."/>
            <person name="Mohamoud Y."/>
            <person name="Halpin R."/>
            <person name="Paulsen I.T."/>
        </authorList>
    </citation>
    <scope>NUCLEOTIDE SEQUENCE [LARGE SCALE GENOMIC DNA]</scope>
    <source>
        <strain>CC9311</strain>
    </source>
</reference>
<feature type="chain" id="PRO_0000302317" description="Large ribosomal subunit protein bL36">
    <location>
        <begin position="1"/>
        <end position="37"/>
    </location>
</feature>
<organism>
    <name type="scientific">Synechococcus sp. (strain CC9311)</name>
    <dbReference type="NCBI Taxonomy" id="64471"/>
    <lineage>
        <taxon>Bacteria</taxon>
        <taxon>Bacillati</taxon>
        <taxon>Cyanobacteriota</taxon>
        <taxon>Cyanophyceae</taxon>
        <taxon>Synechococcales</taxon>
        <taxon>Synechococcaceae</taxon>
        <taxon>Synechococcus</taxon>
    </lineage>
</organism>